<sequence length="141" mass="16166">MESTSKFTYRGYTLEELRQMPIEKLAEIMPARQRRSLLRVFKQGTSEEHLKLLEKIRRAAKLASEGKKQPVIKTHLRDFIILPEMVGLTIHVHNGKEFVPVEITPEKIGHYLGEFALTTKKVEHGEPGLKATRSSMFVALK</sequence>
<dbReference type="EMBL" id="CP000505">
    <property type="protein sequence ID" value="ABL77635.1"/>
    <property type="molecule type" value="Genomic_DNA"/>
</dbReference>
<dbReference type="RefSeq" id="WP_011751900.1">
    <property type="nucleotide sequence ID" value="NC_008698.1"/>
</dbReference>
<dbReference type="SMR" id="A1RWQ5"/>
<dbReference type="STRING" id="368408.Tpen_0225"/>
<dbReference type="EnsemblBacteria" id="ABL77635">
    <property type="protein sequence ID" value="ABL77635"/>
    <property type="gene ID" value="Tpen_0225"/>
</dbReference>
<dbReference type="GeneID" id="4601215"/>
<dbReference type="KEGG" id="tpe:Tpen_0225"/>
<dbReference type="eggNOG" id="arCOG04099">
    <property type="taxonomic scope" value="Archaea"/>
</dbReference>
<dbReference type="HOGENOM" id="CLU_097347_1_0_2"/>
<dbReference type="OrthoDB" id="30559at2157"/>
<dbReference type="Proteomes" id="UP000000641">
    <property type="component" value="Chromosome"/>
</dbReference>
<dbReference type="GO" id="GO:0022627">
    <property type="term" value="C:cytosolic small ribosomal subunit"/>
    <property type="evidence" value="ECO:0007669"/>
    <property type="project" value="TreeGrafter"/>
</dbReference>
<dbReference type="GO" id="GO:0019843">
    <property type="term" value="F:rRNA binding"/>
    <property type="evidence" value="ECO:0007669"/>
    <property type="project" value="UniProtKB-UniRule"/>
</dbReference>
<dbReference type="GO" id="GO:0003735">
    <property type="term" value="F:structural constituent of ribosome"/>
    <property type="evidence" value="ECO:0007669"/>
    <property type="project" value="InterPro"/>
</dbReference>
<dbReference type="GO" id="GO:0000028">
    <property type="term" value="P:ribosomal small subunit assembly"/>
    <property type="evidence" value="ECO:0007669"/>
    <property type="project" value="TreeGrafter"/>
</dbReference>
<dbReference type="GO" id="GO:0006412">
    <property type="term" value="P:translation"/>
    <property type="evidence" value="ECO:0007669"/>
    <property type="project" value="UniProtKB-UniRule"/>
</dbReference>
<dbReference type="FunFam" id="3.30.860.10:FF:000002">
    <property type="entry name" value="40S ribosomal protein S15"/>
    <property type="match status" value="1"/>
</dbReference>
<dbReference type="Gene3D" id="3.30.860.10">
    <property type="entry name" value="30s Ribosomal Protein S19, Chain A"/>
    <property type="match status" value="1"/>
</dbReference>
<dbReference type="HAMAP" id="MF_00531">
    <property type="entry name" value="Ribosomal_uS19"/>
    <property type="match status" value="1"/>
</dbReference>
<dbReference type="InterPro" id="IPR002222">
    <property type="entry name" value="Ribosomal_uS19"/>
</dbReference>
<dbReference type="InterPro" id="IPR020934">
    <property type="entry name" value="Ribosomal_uS19_CS"/>
</dbReference>
<dbReference type="InterPro" id="IPR005713">
    <property type="entry name" value="Ribosomal_uS19_euk/arc"/>
</dbReference>
<dbReference type="InterPro" id="IPR023575">
    <property type="entry name" value="Ribosomal_uS19_SF"/>
</dbReference>
<dbReference type="NCBIfam" id="NF003121">
    <property type="entry name" value="PRK04038.1"/>
    <property type="match status" value="1"/>
</dbReference>
<dbReference type="NCBIfam" id="TIGR01025">
    <property type="entry name" value="uS19_arch"/>
    <property type="match status" value="1"/>
</dbReference>
<dbReference type="PANTHER" id="PTHR11880">
    <property type="entry name" value="RIBOSOMAL PROTEIN S19P FAMILY MEMBER"/>
    <property type="match status" value="1"/>
</dbReference>
<dbReference type="PANTHER" id="PTHR11880:SF2">
    <property type="entry name" value="SMALL RIBOSOMAL SUBUNIT PROTEIN US19"/>
    <property type="match status" value="1"/>
</dbReference>
<dbReference type="Pfam" id="PF00203">
    <property type="entry name" value="Ribosomal_S19"/>
    <property type="match status" value="1"/>
</dbReference>
<dbReference type="PIRSF" id="PIRSF002144">
    <property type="entry name" value="Ribosomal_S19"/>
    <property type="match status" value="1"/>
</dbReference>
<dbReference type="PRINTS" id="PR00975">
    <property type="entry name" value="RIBOSOMALS19"/>
</dbReference>
<dbReference type="SUPFAM" id="SSF54570">
    <property type="entry name" value="Ribosomal protein S19"/>
    <property type="match status" value="1"/>
</dbReference>
<dbReference type="PROSITE" id="PS00323">
    <property type="entry name" value="RIBOSOMAL_S19"/>
    <property type="match status" value="1"/>
</dbReference>
<reference key="1">
    <citation type="journal article" date="2008" name="J. Bacteriol.">
        <title>Genome sequence of Thermofilum pendens reveals an exceptional loss of biosynthetic pathways without genome reduction.</title>
        <authorList>
            <person name="Anderson I."/>
            <person name="Rodriguez J."/>
            <person name="Susanti D."/>
            <person name="Porat I."/>
            <person name="Reich C."/>
            <person name="Ulrich L.E."/>
            <person name="Elkins J.G."/>
            <person name="Mavromatis K."/>
            <person name="Lykidis A."/>
            <person name="Kim E."/>
            <person name="Thompson L.S."/>
            <person name="Nolan M."/>
            <person name="Land M."/>
            <person name="Copeland A."/>
            <person name="Lapidus A."/>
            <person name="Lucas S."/>
            <person name="Detter C."/>
            <person name="Zhulin I.B."/>
            <person name="Olsen G.J."/>
            <person name="Whitman W."/>
            <person name="Mukhopadhyay B."/>
            <person name="Bristow J."/>
            <person name="Kyrpides N."/>
        </authorList>
    </citation>
    <scope>NUCLEOTIDE SEQUENCE [LARGE SCALE GENOMIC DNA]</scope>
    <source>
        <strain>DSM 2475 / Hrk 5</strain>
    </source>
</reference>
<comment type="function">
    <text evidence="1">Protein S19 forms a complex with S13 that binds strongly to the 16S ribosomal RNA.</text>
</comment>
<comment type="similarity">
    <text evidence="1">Belongs to the universal ribosomal protein uS19 family.</text>
</comment>
<organism>
    <name type="scientific">Thermofilum pendens (strain DSM 2475 / Hrk 5)</name>
    <dbReference type="NCBI Taxonomy" id="368408"/>
    <lineage>
        <taxon>Archaea</taxon>
        <taxon>Thermoproteota</taxon>
        <taxon>Thermoprotei</taxon>
        <taxon>Thermofilales</taxon>
        <taxon>Thermofilaceae</taxon>
        <taxon>Thermofilum</taxon>
    </lineage>
</organism>
<protein>
    <recommendedName>
        <fullName evidence="1">Small ribosomal subunit protein uS19</fullName>
    </recommendedName>
    <alternativeName>
        <fullName evidence="2">30S ribosomal protein S19</fullName>
    </alternativeName>
</protein>
<accession>A1RWQ5</accession>
<evidence type="ECO:0000255" key="1">
    <source>
        <dbReference type="HAMAP-Rule" id="MF_00531"/>
    </source>
</evidence>
<evidence type="ECO:0000305" key="2"/>
<name>RS19_THEPD</name>
<gene>
    <name evidence="1" type="primary">rps19</name>
    <name type="ordered locus">Tpen_0225</name>
</gene>
<keyword id="KW-1185">Reference proteome</keyword>
<keyword id="KW-0687">Ribonucleoprotein</keyword>
<keyword id="KW-0689">Ribosomal protein</keyword>
<keyword id="KW-0694">RNA-binding</keyword>
<keyword id="KW-0699">rRNA-binding</keyword>
<proteinExistence type="inferred from homology"/>
<feature type="chain" id="PRO_1000051141" description="Small ribosomal subunit protein uS19">
    <location>
        <begin position="1"/>
        <end position="141"/>
    </location>
</feature>